<reference key="1">
    <citation type="journal article" date="2010" name="J. Bacteriol.">
        <title>Complete genome sequence of the aerobic facultative methanotroph Methylocella silvestris BL2.</title>
        <authorList>
            <person name="Chen Y."/>
            <person name="Crombie A."/>
            <person name="Rahman M.T."/>
            <person name="Dedysh S.N."/>
            <person name="Liesack W."/>
            <person name="Stott M.B."/>
            <person name="Alam M."/>
            <person name="Theisen A.R."/>
            <person name="Murrell J.C."/>
            <person name="Dunfield P.F."/>
        </authorList>
    </citation>
    <scope>NUCLEOTIDE SEQUENCE [LARGE SCALE GENOMIC DNA]</scope>
    <source>
        <strain>DSM 15510 / CIP 108128 / LMG 27833 / NCIMB 13906 / BL2</strain>
    </source>
</reference>
<gene>
    <name evidence="2" type="primary">tuf</name>
    <name type="ordered locus">Msil_0582</name>
</gene>
<organism>
    <name type="scientific">Methylocella silvestris (strain DSM 15510 / CIP 108128 / LMG 27833 / NCIMB 13906 / BL2)</name>
    <dbReference type="NCBI Taxonomy" id="395965"/>
    <lineage>
        <taxon>Bacteria</taxon>
        <taxon>Pseudomonadati</taxon>
        <taxon>Pseudomonadota</taxon>
        <taxon>Alphaproteobacteria</taxon>
        <taxon>Hyphomicrobiales</taxon>
        <taxon>Beijerinckiaceae</taxon>
        <taxon>Methylocella</taxon>
    </lineage>
</organism>
<proteinExistence type="inferred from homology"/>
<sequence length="396" mass="43135">MGKEKFQRNKPHCNIGTIGHVDHGKTSLTAAITKVLAETGGATYTAYDQIDKAPEEKARGITISTAHVEYETKKRHYAHVDCPGHADYVKNMITGAAQMDGAILVVSAADGPMPQTREHILLARQVGVPALVVFMNKVDMVDDAELLELVELEVRELLSKYDFPGDDIPITKGSALCALEGKQPEIGHDAVLALMDTVDAYIPQPERPIDLPFLMPVEDVFSISGRGTVVTGRVERGIVKVGEEIEIVGLKPTVKTVVTGVEMFRKLLDQGQAGDNIGALLRGTKREDVERGQVLCKPGSVKPHTKFKAEAYILTKDEGGRHTPFFTNYRPQFYFRTTDVTGVVTLPEGTEMVMPGDNVTMDVELIAPIAMEEKLRFAIREGGRTVGAGVVASITE</sequence>
<accession>B8ELG5</accession>
<feature type="chain" id="PRO_1000201406" description="Elongation factor Tu">
    <location>
        <begin position="1"/>
        <end position="396"/>
    </location>
</feature>
<feature type="domain" description="tr-type G">
    <location>
        <begin position="10"/>
        <end position="206"/>
    </location>
</feature>
<feature type="region of interest" description="G1" evidence="1">
    <location>
        <begin position="19"/>
        <end position="26"/>
    </location>
</feature>
<feature type="region of interest" description="G2" evidence="1">
    <location>
        <begin position="60"/>
        <end position="64"/>
    </location>
</feature>
<feature type="region of interest" description="G3" evidence="1">
    <location>
        <begin position="81"/>
        <end position="84"/>
    </location>
</feature>
<feature type="region of interest" description="G4" evidence="1">
    <location>
        <begin position="136"/>
        <end position="139"/>
    </location>
</feature>
<feature type="region of interest" description="G5" evidence="1">
    <location>
        <begin position="174"/>
        <end position="176"/>
    </location>
</feature>
<feature type="binding site" evidence="2">
    <location>
        <begin position="19"/>
        <end position="26"/>
    </location>
    <ligand>
        <name>GTP</name>
        <dbReference type="ChEBI" id="CHEBI:37565"/>
    </ligand>
</feature>
<feature type="binding site" evidence="2">
    <location>
        <position position="26"/>
    </location>
    <ligand>
        <name>Mg(2+)</name>
        <dbReference type="ChEBI" id="CHEBI:18420"/>
    </ligand>
</feature>
<feature type="binding site" evidence="2">
    <location>
        <begin position="81"/>
        <end position="85"/>
    </location>
    <ligand>
        <name>GTP</name>
        <dbReference type="ChEBI" id="CHEBI:37565"/>
    </ligand>
</feature>
<feature type="binding site" evidence="2">
    <location>
        <begin position="136"/>
        <end position="139"/>
    </location>
    <ligand>
        <name>GTP</name>
        <dbReference type="ChEBI" id="CHEBI:37565"/>
    </ligand>
</feature>
<evidence type="ECO:0000250" key="1"/>
<evidence type="ECO:0000255" key="2">
    <source>
        <dbReference type="HAMAP-Rule" id="MF_00118"/>
    </source>
</evidence>
<keyword id="KW-0963">Cytoplasm</keyword>
<keyword id="KW-0251">Elongation factor</keyword>
<keyword id="KW-0342">GTP-binding</keyword>
<keyword id="KW-0378">Hydrolase</keyword>
<keyword id="KW-0460">Magnesium</keyword>
<keyword id="KW-0479">Metal-binding</keyword>
<keyword id="KW-0547">Nucleotide-binding</keyword>
<keyword id="KW-0648">Protein biosynthesis</keyword>
<keyword id="KW-1185">Reference proteome</keyword>
<protein>
    <recommendedName>
        <fullName evidence="2">Elongation factor Tu</fullName>
        <shortName evidence="2">EF-Tu</shortName>
        <ecNumber evidence="2">3.6.5.3</ecNumber>
    </recommendedName>
</protein>
<comment type="function">
    <text evidence="2">GTP hydrolase that promotes the GTP-dependent binding of aminoacyl-tRNA to the A-site of ribosomes during protein biosynthesis.</text>
</comment>
<comment type="catalytic activity">
    <reaction evidence="2">
        <text>GTP + H2O = GDP + phosphate + H(+)</text>
        <dbReference type="Rhea" id="RHEA:19669"/>
        <dbReference type="ChEBI" id="CHEBI:15377"/>
        <dbReference type="ChEBI" id="CHEBI:15378"/>
        <dbReference type="ChEBI" id="CHEBI:37565"/>
        <dbReference type="ChEBI" id="CHEBI:43474"/>
        <dbReference type="ChEBI" id="CHEBI:58189"/>
        <dbReference type="EC" id="3.6.5.3"/>
    </reaction>
    <physiologicalReaction direction="left-to-right" evidence="2">
        <dbReference type="Rhea" id="RHEA:19670"/>
    </physiologicalReaction>
</comment>
<comment type="subunit">
    <text evidence="2">Monomer.</text>
</comment>
<comment type="subcellular location">
    <subcellularLocation>
        <location evidence="2">Cytoplasm</location>
    </subcellularLocation>
</comment>
<comment type="similarity">
    <text evidence="2">Belongs to the TRAFAC class translation factor GTPase superfamily. Classic translation factor GTPase family. EF-Tu/EF-1A subfamily.</text>
</comment>
<name>EFTU_METSB</name>
<dbReference type="EC" id="3.6.5.3" evidence="2"/>
<dbReference type="EMBL" id="CP001280">
    <property type="protein sequence ID" value="ACK49554.1"/>
    <property type="molecule type" value="Genomic_DNA"/>
</dbReference>
<dbReference type="RefSeq" id="WP_012589624.1">
    <property type="nucleotide sequence ID" value="NC_011666.1"/>
</dbReference>
<dbReference type="SMR" id="B8ELG5"/>
<dbReference type="STRING" id="395965.Msil_0582"/>
<dbReference type="KEGG" id="msl:Msil_0582"/>
<dbReference type="eggNOG" id="COG0050">
    <property type="taxonomic scope" value="Bacteria"/>
</dbReference>
<dbReference type="HOGENOM" id="CLU_007265_0_0_5"/>
<dbReference type="OrthoDB" id="9803139at2"/>
<dbReference type="Proteomes" id="UP000002257">
    <property type="component" value="Chromosome"/>
</dbReference>
<dbReference type="GO" id="GO:0005829">
    <property type="term" value="C:cytosol"/>
    <property type="evidence" value="ECO:0007669"/>
    <property type="project" value="TreeGrafter"/>
</dbReference>
<dbReference type="GO" id="GO:0005525">
    <property type="term" value="F:GTP binding"/>
    <property type="evidence" value="ECO:0007669"/>
    <property type="project" value="UniProtKB-UniRule"/>
</dbReference>
<dbReference type="GO" id="GO:0003924">
    <property type="term" value="F:GTPase activity"/>
    <property type="evidence" value="ECO:0007669"/>
    <property type="project" value="InterPro"/>
</dbReference>
<dbReference type="GO" id="GO:0097216">
    <property type="term" value="F:guanosine tetraphosphate binding"/>
    <property type="evidence" value="ECO:0007669"/>
    <property type="project" value="UniProtKB-ARBA"/>
</dbReference>
<dbReference type="GO" id="GO:0003746">
    <property type="term" value="F:translation elongation factor activity"/>
    <property type="evidence" value="ECO:0007669"/>
    <property type="project" value="UniProtKB-UniRule"/>
</dbReference>
<dbReference type="CDD" id="cd01884">
    <property type="entry name" value="EF_Tu"/>
    <property type="match status" value="1"/>
</dbReference>
<dbReference type="CDD" id="cd03697">
    <property type="entry name" value="EFTU_II"/>
    <property type="match status" value="1"/>
</dbReference>
<dbReference type="CDD" id="cd03707">
    <property type="entry name" value="EFTU_III"/>
    <property type="match status" value="1"/>
</dbReference>
<dbReference type="FunFam" id="2.40.30.10:FF:000001">
    <property type="entry name" value="Elongation factor Tu"/>
    <property type="match status" value="1"/>
</dbReference>
<dbReference type="FunFam" id="3.40.50.300:FF:000003">
    <property type="entry name" value="Elongation factor Tu"/>
    <property type="match status" value="1"/>
</dbReference>
<dbReference type="Gene3D" id="3.40.50.300">
    <property type="entry name" value="P-loop containing nucleotide triphosphate hydrolases"/>
    <property type="match status" value="1"/>
</dbReference>
<dbReference type="Gene3D" id="2.40.30.10">
    <property type="entry name" value="Translation factors"/>
    <property type="match status" value="2"/>
</dbReference>
<dbReference type="HAMAP" id="MF_00118_B">
    <property type="entry name" value="EF_Tu_B"/>
    <property type="match status" value="1"/>
</dbReference>
<dbReference type="InterPro" id="IPR041709">
    <property type="entry name" value="EF-Tu_GTP-bd"/>
</dbReference>
<dbReference type="InterPro" id="IPR050055">
    <property type="entry name" value="EF-Tu_GTPase"/>
</dbReference>
<dbReference type="InterPro" id="IPR004161">
    <property type="entry name" value="EFTu-like_2"/>
</dbReference>
<dbReference type="InterPro" id="IPR033720">
    <property type="entry name" value="EFTU_2"/>
</dbReference>
<dbReference type="InterPro" id="IPR031157">
    <property type="entry name" value="G_TR_CS"/>
</dbReference>
<dbReference type="InterPro" id="IPR027417">
    <property type="entry name" value="P-loop_NTPase"/>
</dbReference>
<dbReference type="InterPro" id="IPR005225">
    <property type="entry name" value="Small_GTP-bd"/>
</dbReference>
<dbReference type="InterPro" id="IPR000795">
    <property type="entry name" value="T_Tr_GTP-bd_dom"/>
</dbReference>
<dbReference type="InterPro" id="IPR009000">
    <property type="entry name" value="Transl_B-barrel_sf"/>
</dbReference>
<dbReference type="InterPro" id="IPR009001">
    <property type="entry name" value="Transl_elong_EF1A/Init_IF2_C"/>
</dbReference>
<dbReference type="InterPro" id="IPR004541">
    <property type="entry name" value="Transl_elong_EFTu/EF1A_bac/org"/>
</dbReference>
<dbReference type="InterPro" id="IPR004160">
    <property type="entry name" value="Transl_elong_EFTu/EF1A_C"/>
</dbReference>
<dbReference type="NCBIfam" id="TIGR00485">
    <property type="entry name" value="EF-Tu"/>
    <property type="match status" value="1"/>
</dbReference>
<dbReference type="NCBIfam" id="NF000766">
    <property type="entry name" value="PRK00049.1"/>
    <property type="match status" value="1"/>
</dbReference>
<dbReference type="NCBIfam" id="NF009372">
    <property type="entry name" value="PRK12735.1"/>
    <property type="match status" value="1"/>
</dbReference>
<dbReference type="NCBIfam" id="NF009373">
    <property type="entry name" value="PRK12736.1"/>
    <property type="match status" value="1"/>
</dbReference>
<dbReference type="NCBIfam" id="TIGR00231">
    <property type="entry name" value="small_GTP"/>
    <property type="match status" value="1"/>
</dbReference>
<dbReference type="PANTHER" id="PTHR43721:SF22">
    <property type="entry name" value="ELONGATION FACTOR TU, MITOCHONDRIAL"/>
    <property type="match status" value="1"/>
</dbReference>
<dbReference type="PANTHER" id="PTHR43721">
    <property type="entry name" value="ELONGATION FACTOR TU-RELATED"/>
    <property type="match status" value="1"/>
</dbReference>
<dbReference type="Pfam" id="PF00009">
    <property type="entry name" value="GTP_EFTU"/>
    <property type="match status" value="1"/>
</dbReference>
<dbReference type="Pfam" id="PF03144">
    <property type="entry name" value="GTP_EFTU_D2"/>
    <property type="match status" value="1"/>
</dbReference>
<dbReference type="Pfam" id="PF03143">
    <property type="entry name" value="GTP_EFTU_D3"/>
    <property type="match status" value="1"/>
</dbReference>
<dbReference type="PRINTS" id="PR00315">
    <property type="entry name" value="ELONGATNFCT"/>
</dbReference>
<dbReference type="SUPFAM" id="SSF50465">
    <property type="entry name" value="EF-Tu/eEF-1alpha/eIF2-gamma C-terminal domain"/>
    <property type="match status" value="1"/>
</dbReference>
<dbReference type="SUPFAM" id="SSF52540">
    <property type="entry name" value="P-loop containing nucleoside triphosphate hydrolases"/>
    <property type="match status" value="1"/>
</dbReference>
<dbReference type="SUPFAM" id="SSF50447">
    <property type="entry name" value="Translation proteins"/>
    <property type="match status" value="1"/>
</dbReference>
<dbReference type="PROSITE" id="PS00301">
    <property type="entry name" value="G_TR_1"/>
    <property type="match status" value="1"/>
</dbReference>
<dbReference type="PROSITE" id="PS51722">
    <property type="entry name" value="G_TR_2"/>
    <property type="match status" value="1"/>
</dbReference>